<gene>
    <name type="primary">sph</name>
</gene>
<organism>
    <name type="scientific">Leptospira interrogans</name>
    <dbReference type="NCBI Taxonomy" id="173"/>
    <lineage>
        <taxon>Bacteria</taxon>
        <taxon>Pseudomonadati</taxon>
        <taxon>Spirochaetota</taxon>
        <taxon>Spirochaetia</taxon>
        <taxon>Leptospirales</taxon>
        <taxon>Leptospiraceae</taxon>
        <taxon>Leptospira</taxon>
    </lineage>
</organism>
<evidence type="ECO:0000255" key="1"/>
<name>PHL_LEPIR</name>
<dbReference type="EC" id="3.1.4.12"/>
<dbReference type="EMBL" id="X52176">
    <property type="protein sequence ID" value="CAA36424.1"/>
    <property type="molecule type" value="Genomic_DNA"/>
</dbReference>
<dbReference type="PIR" id="S22634">
    <property type="entry name" value="S22634"/>
</dbReference>
<dbReference type="SMR" id="P17627"/>
<dbReference type="GO" id="GO:0005576">
    <property type="term" value="C:extracellular region"/>
    <property type="evidence" value="ECO:0007669"/>
    <property type="project" value="UniProtKB-SubCell"/>
</dbReference>
<dbReference type="GO" id="GO:0004767">
    <property type="term" value="F:sphingomyelin phosphodiesterase activity"/>
    <property type="evidence" value="ECO:0007669"/>
    <property type="project" value="UniProtKB-EC"/>
</dbReference>
<dbReference type="CDD" id="cd09078">
    <property type="entry name" value="nSMase"/>
    <property type="match status" value="1"/>
</dbReference>
<dbReference type="Gene3D" id="3.60.10.10">
    <property type="entry name" value="Endonuclease/exonuclease/phosphatase"/>
    <property type="match status" value="1"/>
</dbReference>
<dbReference type="InterPro" id="IPR036691">
    <property type="entry name" value="Endo/exonu/phosph_ase_sf"/>
</dbReference>
<dbReference type="InterPro" id="IPR005135">
    <property type="entry name" value="Endo/exonuclease/phosphatase"/>
</dbReference>
<dbReference type="InterPro" id="IPR038772">
    <property type="entry name" value="Sph/SMPD2-like"/>
</dbReference>
<dbReference type="InterPro" id="IPR017766">
    <property type="entry name" value="Sphingomyelinase/PLipase_C"/>
</dbReference>
<dbReference type="NCBIfam" id="TIGR03395">
    <property type="entry name" value="sphingomy"/>
    <property type="match status" value="1"/>
</dbReference>
<dbReference type="PANTHER" id="PTHR16320:SF23">
    <property type="entry name" value="SPHINGOMYELINASE C 1"/>
    <property type="match status" value="1"/>
</dbReference>
<dbReference type="PANTHER" id="PTHR16320">
    <property type="entry name" value="SPHINGOMYELINASE FAMILY MEMBER"/>
    <property type="match status" value="1"/>
</dbReference>
<dbReference type="Pfam" id="PF03372">
    <property type="entry name" value="Exo_endo_phos"/>
    <property type="match status" value="1"/>
</dbReference>
<dbReference type="SUPFAM" id="SSF56219">
    <property type="entry name" value="DNase I-like"/>
    <property type="match status" value="1"/>
</dbReference>
<feature type="signal peptide" evidence="1">
    <location>
        <begin position="1"/>
        <end position="27"/>
    </location>
</feature>
<feature type="chain" id="PRO_0000022052" description="Sphingomyelinase C">
    <location>
        <begin position="28"/>
        <end position="556"/>
    </location>
</feature>
<accession>P17627</accession>
<reference key="1">
    <citation type="journal article" date="1990" name="Infect. Immun.">
        <title>Molecular analysis of a sphingomyelinase C gene from Leptospira interrogans serovar hardjo.</title>
        <authorList>
            <person name="Segers R.P.A.M."/>
            <person name="van der Drift A."/>
            <person name="de Nijs A."/>
            <person name="Corcione P."/>
            <person name="van der Zeijst B.A.M."/>
            <person name="Gaastra W."/>
        </authorList>
    </citation>
    <scope>NUCLEOTIDE SEQUENCE [GENOMIC DNA]</scope>
    <source>
        <strain>Sponselee / Serogroup Sejroe / Serovar hardjo</strain>
    </source>
</reference>
<sequence>MRIKKYTKVRLLVNCCLLLFFLIDCGADRQSLYKDLLASLIYISDNKNIGSTNSDLTGSGSVSSSPADAAPENSILANSIPENMGIKILTHNVFLLPKTLPGWGNWGQNERAQRIVSSNYIQNQDVIVFDEAFDTDARKILLDGVRSEYPYQTDVIGRTKKGWDATLGLYRTDAFTNGGVVIVSKWPIEEKIQHVFKEKGCGADVFSNKGFAYVRIDKNGRKFHIIGTHVQAQDSGCANLGVVSRVNQFNEIRDFIDSKKIPKNEMVLIAGDLNVIKGSREYHQMLCILNVNNPKYVGVPFTWDTKTNEIAAFYYKKVEPAYLDYIFVSKSHFQPPIWQNLAYDPISAKTWTAKGYTSDEFSDHYPVYGFIYADSSTPTKSGRKRKYDRVSFVSVATGKKIQANSEKSNAWLKVNATTETDLTKFNLVQTNDPDSNPSCMKSGHVRIESSHSLNYFWNWWLGGGKGNYAYYPKFNDGSNRIQIINLDGGCLQDGSRVAFKDYDTISRRQYFLTVWEGGNWDKYLYLWRSHIGLREIFYLKLDSSPEMNWSKKLIYR</sequence>
<proteinExistence type="inferred from homology"/>
<comment type="catalytic activity">
    <reaction>
        <text>a sphingomyelin + H2O = phosphocholine + an N-acylsphing-4-enine + H(+)</text>
        <dbReference type="Rhea" id="RHEA:19253"/>
        <dbReference type="ChEBI" id="CHEBI:15377"/>
        <dbReference type="ChEBI" id="CHEBI:15378"/>
        <dbReference type="ChEBI" id="CHEBI:17636"/>
        <dbReference type="ChEBI" id="CHEBI:52639"/>
        <dbReference type="ChEBI" id="CHEBI:295975"/>
        <dbReference type="EC" id="3.1.4.12"/>
    </reaction>
</comment>
<comment type="subcellular location">
    <subcellularLocation>
        <location>Secreted</location>
    </subcellularLocation>
</comment>
<keyword id="KW-0378">Hydrolase</keyword>
<keyword id="KW-0964">Secreted</keyword>
<keyword id="KW-0732">Signal</keyword>
<protein>
    <recommendedName>
        <fullName>Sphingomyelinase C</fullName>
        <ecNumber>3.1.4.12</ecNumber>
    </recommendedName>
    <alternativeName>
        <fullName>Sphingomyelin phosphodiesterase</fullName>
        <shortName>SMase</shortName>
    </alternativeName>
</protein>